<organism>
    <name type="scientific">Kalopanax septemlobus</name>
    <name type="common">Castor aralia</name>
    <name type="synonym">Acanthopanax septemlobus</name>
    <dbReference type="NCBI Taxonomy" id="228393"/>
    <lineage>
        <taxon>Eukaryota</taxon>
        <taxon>Viridiplantae</taxon>
        <taxon>Streptophyta</taxon>
        <taxon>Embryophyta</taxon>
        <taxon>Tracheophyta</taxon>
        <taxon>Spermatophyta</taxon>
        <taxon>Magnoliopsida</taxon>
        <taxon>eudicotyledons</taxon>
        <taxon>Gunneridae</taxon>
        <taxon>Pentapetalae</taxon>
        <taxon>asterids</taxon>
        <taxon>campanulids</taxon>
        <taxon>Apiales</taxon>
        <taxon>Araliaceae</taxon>
        <taxon>Kalopanax</taxon>
    </lineage>
</organism>
<dbReference type="EC" id="5.4.99.39" evidence="3"/>
<dbReference type="EMBL" id="KT150523">
    <property type="protein sequence ID" value="ALO23119.1"/>
    <property type="molecule type" value="mRNA"/>
</dbReference>
<dbReference type="SMR" id="A0A0S2IHL6"/>
<dbReference type="UniPathway" id="UPA00213"/>
<dbReference type="GO" id="GO:0005811">
    <property type="term" value="C:lipid droplet"/>
    <property type="evidence" value="ECO:0007669"/>
    <property type="project" value="InterPro"/>
</dbReference>
<dbReference type="GO" id="GO:0042300">
    <property type="term" value="F:beta-amyrin synthase activity"/>
    <property type="evidence" value="ECO:0000314"/>
    <property type="project" value="UniProtKB"/>
</dbReference>
<dbReference type="GO" id="GO:0016104">
    <property type="term" value="P:triterpenoid biosynthetic process"/>
    <property type="evidence" value="ECO:0000314"/>
    <property type="project" value="UniProtKB"/>
</dbReference>
<dbReference type="CDD" id="cd02892">
    <property type="entry name" value="SQCY_1"/>
    <property type="match status" value="1"/>
</dbReference>
<dbReference type="FunFam" id="1.50.10.20:FF:000011">
    <property type="entry name" value="Terpene cyclase/mutase family member"/>
    <property type="match status" value="1"/>
</dbReference>
<dbReference type="FunFam" id="1.50.10.20:FF:000064">
    <property type="entry name" value="Uncharacterized protein"/>
    <property type="match status" value="1"/>
</dbReference>
<dbReference type="Gene3D" id="1.50.10.20">
    <property type="match status" value="2"/>
</dbReference>
<dbReference type="InterPro" id="IPR032696">
    <property type="entry name" value="SQ_cyclase_C"/>
</dbReference>
<dbReference type="InterPro" id="IPR032697">
    <property type="entry name" value="SQ_cyclase_N"/>
</dbReference>
<dbReference type="InterPro" id="IPR018333">
    <property type="entry name" value="Squalene_cyclase"/>
</dbReference>
<dbReference type="InterPro" id="IPR002365">
    <property type="entry name" value="Terpene_synthase_CS"/>
</dbReference>
<dbReference type="InterPro" id="IPR008930">
    <property type="entry name" value="Terpenoid_cyclase/PrenylTrfase"/>
</dbReference>
<dbReference type="NCBIfam" id="TIGR01787">
    <property type="entry name" value="squalene_cyclas"/>
    <property type="match status" value="1"/>
</dbReference>
<dbReference type="PANTHER" id="PTHR11764:SF58">
    <property type="entry name" value="BETA-AMYRIN SYNTHASE-RELATED"/>
    <property type="match status" value="1"/>
</dbReference>
<dbReference type="PANTHER" id="PTHR11764">
    <property type="entry name" value="TERPENE CYCLASE/MUTASE FAMILY MEMBER"/>
    <property type="match status" value="1"/>
</dbReference>
<dbReference type="Pfam" id="PF13243">
    <property type="entry name" value="SQHop_cyclase_C"/>
    <property type="match status" value="1"/>
</dbReference>
<dbReference type="Pfam" id="PF13249">
    <property type="entry name" value="SQHop_cyclase_N"/>
    <property type="match status" value="1"/>
</dbReference>
<dbReference type="SFLD" id="SFLDG01016">
    <property type="entry name" value="Prenyltransferase_Like_2"/>
    <property type="match status" value="1"/>
</dbReference>
<dbReference type="SUPFAM" id="SSF48239">
    <property type="entry name" value="Terpenoid cyclases/Protein prenyltransferases"/>
    <property type="match status" value="2"/>
</dbReference>
<dbReference type="PROSITE" id="PS01074">
    <property type="entry name" value="TERPENE_SYNTHASES"/>
    <property type="match status" value="1"/>
</dbReference>
<evidence type="ECO:0000250" key="1">
    <source>
        <dbReference type="UniProtKB" id="P48449"/>
    </source>
</evidence>
<evidence type="ECO:0000255" key="2"/>
<evidence type="ECO:0000269" key="3">
    <source>
    </source>
</evidence>
<evidence type="ECO:0000303" key="4">
    <source>
    </source>
</evidence>
<evidence type="ECO:0000305" key="5"/>
<keyword id="KW-0413">Isomerase</keyword>
<keyword id="KW-0414">Isoprene biosynthesis</keyword>
<keyword id="KW-0677">Repeat</keyword>
<protein>
    <recommendedName>
        <fullName evidence="4">Beta-amyrin synthase 1</fullName>
        <shortName evidence="4">KsBAS1</shortName>
        <ecNumber evidence="3">5.4.99.39</ecNumber>
    </recommendedName>
</protein>
<proteinExistence type="evidence at protein level"/>
<gene>
    <name evidence="4" type="primary">BAS1</name>
    <name evidence="4" type="synonym">BAS</name>
</gene>
<comment type="function">
    <text evidence="3">Component of the oleanane-type triterpene saponins biosynthetic pathway (PubMed:29186583). Oxidosqualene cyclase converting oxidosqualene into beta-amyrin, generating five rings and eight asymmetric centers in a single transformation (PubMed:29186583).</text>
</comment>
<comment type="catalytic activity">
    <reaction evidence="3">
        <text>(S)-2,3-epoxysqualene = beta-amyrin</text>
        <dbReference type="Rhea" id="RHEA:31007"/>
        <dbReference type="ChEBI" id="CHEBI:10352"/>
        <dbReference type="ChEBI" id="CHEBI:15441"/>
        <dbReference type="EC" id="5.4.99.39"/>
    </reaction>
    <physiologicalReaction direction="left-to-right" evidence="3">
        <dbReference type="Rhea" id="RHEA:31008"/>
    </physiologicalReaction>
</comment>
<comment type="pathway">
    <text evidence="5">Secondary metabolite biosynthesis; terpenoid biosynthesis.</text>
</comment>
<comment type="similarity">
    <text evidence="5">Belongs to the terpene cyclase/mutase family.</text>
</comment>
<accession>A0A0S2IHL6</accession>
<reference key="1">
    <citation type="journal article" date="2018" name="Plant Cell Physiol.">
        <title>Transcriptomic analysis of Kalopanax septemlobus and characterization of KsBAS, CYP716A94 and CYP72A397 genes involved in hederagenin saponin biosynthesis.</title>
        <authorList>
            <person name="Han J.Y."/>
            <person name="Chun J.H."/>
            <person name="Oh S.A."/>
            <person name="Park S.B."/>
            <person name="Hwang H.S."/>
            <person name="Lee H."/>
            <person name="Choi Y.E."/>
        </authorList>
    </citation>
    <scope>NUCLEOTIDE SEQUENCE [MRNA]</scope>
    <scope>FUNCTION</scope>
    <scope>CATALYTIC ACTIVITY</scope>
</reference>
<sequence>MWKLKIAEGDKNDPYLYSTNNFVGRQTWEFDPDYVGSPGELEEVEEARRQFGENRYKVKPCGDLLWRLQFLREKNFKQTIPQVKVGDDEAVTYEAATTTLRRAVHFFSALQASDGHWPAEIAGPLYFLPPLVMCLYITGHLDTVFPAEHRKEILRYIYCHQNEDGGWGFHIEGHSTMFCTTLSYICMRILGEGPDGGVNNACARGRKWILDHGSATAVPSWGKTWLSILGVYEWMGSNPMPPEFWILPSFLPMHPAKMWCYCRMVYMPMSYLYGKRFVGPITPLILQLREELYAQPYNEIKWGKVRHVCAKEDIYYPHPLIQDLLWDSLYVLTEPLLTRWPFNKLREKALQTTMKHVHYEDENSRYITIGCVEKVLCMLACWVEDPNGDYFKKHLARIPDYIWVGEDGMKMQSFGSQEWDTGFGIQALLASDLTHELGPTLMKGHDFIKKSQVKDNPSGDFKSMYRHISKGSWTFSDQDHGWQVSDCTAEGLKCCLIFSTMPEEIVGKKMEPELLYNSVNILLSLQSKNGGLAAWEPVTAQDWLELLNPTEFFADIVIEHEYVECTASAIQALVLFKKLYPGHRKKEIDNFITNAIRFLEDVQMPDGSWYGNWGVCFTYGSWFALGGLAAAGKTYDNCAAVRKAVNFLLESQLDDGGWGESYLSCPKKVYVPLEGNRSNLVHTGWALMGLIHSGQAERDPTPLHRAAKLLINSQMEDGDFPQQEITGVFMKNCMLHYATYRNIYPLWALAEYRRRVPLPSLGA</sequence>
<name>BASM1_KALSE</name>
<feature type="chain" id="PRO_0000452138" description="Beta-amyrin synthase 1">
    <location>
        <begin position="1"/>
        <end position="763"/>
    </location>
</feature>
<feature type="repeat" description="PFTB 1" evidence="2">
    <location>
        <begin position="100"/>
        <end position="142"/>
    </location>
</feature>
<feature type="repeat" description="PFTB 2" evidence="2">
    <location>
        <begin position="150"/>
        <end position="191"/>
    </location>
</feature>
<feature type="repeat" description="PFTB 3" evidence="2">
    <location>
        <begin position="441"/>
        <end position="485"/>
    </location>
</feature>
<feature type="repeat" description="PFTB 4" evidence="2">
    <location>
        <begin position="515"/>
        <end position="560"/>
    </location>
</feature>
<feature type="repeat" description="PFTB 5" evidence="2">
    <location>
        <begin position="592"/>
        <end position="632"/>
    </location>
</feature>
<feature type="repeat" description="PFTB 6" evidence="2">
    <location>
        <begin position="641"/>
        <end position="682"/>
    </location>
</feature>
<feature type="repeat" description="PFTB 7" evidence="2">
    <location>
        <begin position="703"/>
        <end position="744"/>
    </location>
</feature>
<feature type="active site" description="Proton donor" evidence="1">
    <location>
        <position position="486"/>
    </location>
</feature>
<feature type="site" description="Transition state stabilizer" evidence="1">
    <location>
        <position position="419"/>
    </location>
</feature>
<feature type="site" description="Transition state stabilizer" evidence="1">
    <location>
        <position position="475"/>
    </location>
</feature>
<feature type="site" description="Transition state stabilizer" evidence="1">
    <location>
        <position position="613"/>
    </location>
</feature>